<organism>
    <name type="scientific">Mus musculus</name>
    <name type="common">Mouse</name>
    <dbReference type="NCBI Taxonomy" id="10090"/>
    <lineage>
        <taxon>Eukaryota</taxon>
        <taxon>Metazoa</taxon>
        <taxon>Chordata</taxon>
        <taxon>Craniata</taxon>
        <taxon>Vertebrata</taxon>
        <taxon>Euteleostomi</taxon>
        <taxon>Mammalia</taxon>
        <taxon>Eutheria</taxon>
        <taxon>Euarchontoglires</taxon>
        <taxon>Glires</taxon>
        <taxon>Rodentia</taxon>
        <taxon>Myomorpha</taxon>
        <taxon>Muroidea</taxon>
        <taxon>Muridae</taxon>
        <taxon>Murinae</taxon>
        <taxon>Mus</taxon>
        <taxon>Mus</taxon>
    </lineage>
</organism>
<dbReference type="EMBL" id="AB109560">
    <property type="protein sequence ID" value="BAC81438.1"/>
    <property type="molecule type" value="mRNA"/>
</dbReference>
<dbReference type="EMBL" id="AB109561">
    <property type="protein sequence ID" value="BAC81439.1"/>
    <property type="molecule type" value="mRNA"/>
</dbReference>
<dbReference type="EMBL" id="AY517483">
    <property type="protein sequence ID" value="AAR99406.1"/>
    <property type="molecule type" value="mRNA"/>
</dbReference>
<dbReference type="EMBL" id="AY517484">
    <property type="protein sequence ID" value="AAR99407.1"/>
    <property type="molecule type" value="mRNA"/>
</dbReference>
<dbReference type="EMBL" id="AY517485">
    <property type="protein sequence ID" value="AAR99408.1"/>
    <property type="molecule type" value="mRNA"/>
</dbReference>
<dbReference type="EMBL" id="AK014697">
    <property type="protein sequence ID" value="BAB29508.1"/>
    <property type="molecule type" value="mRNA"/>
</dbReference>
<dbReference type="EMBL" id="BC139146">
    <property type="protein sequence ID" value="AAI39147.1"/>
    <property type="molecule type" value="mRNA"/>
</dbReference>
<dbReference type="CCDS" id="CCDS27444.1">
    <molecule id="Q7TNJ0-1"/>
</dbReference>
<dbReference type="CCDS" id="CCDS88758.1">
    <molecule id="Q7TNJ0-3"/>
</dbReference>
<dbReference type="CCDS" id="CCDS88759.1">
    <molecule id="Q7TNJ0-4"/>
</dbReference>
<dbReference type="RefSeq" id="NP_001276437.1">
    <molecule id="Q7TNJ0-3"/>
    <property type="nucleotide sequence ID" value="NM_001289508.1"/>
</dbReference>
<dbReference type="RefSeq" id="NP_001276441.1">
    <molecule id="Q7TNJ0-4"/>
    <property type="nucleotide sequence ID" value="NM_001289512.1"/>
</dbReference>
<dbReference type="RefSeq" id="NP_083698.1">
    <molecule id="Q7TNJ0-1"/>
    <property type="nucleotide sequence ID" value="NM_029422.4"/>
</dbReference>
<dbReference type="SMR" id="Q7TNJ0"/>
<dbReference type="BioGRID" id="217724">
    <property type="interactions" value="2"/>
</dbReference>
<dbReference type="FunCoup" id="Q7TNJ0">
    <property type="interactions" value="57"/>
</dbReference>
<dbReference type="STRING" id="10090.ENSMUSP00000022913"/>
<dbReference type="PhosphoSitePlus" id="Q7TNJ0"/>
<dbReference type="PaxDb" id="10090-ENSMUSP00000022913"/>
<dbReference type="Antibodypedia" id="42882">
    <property type="antibodies" value="84 antibodies from 18 providers"/>
</dbReference>
<dbReference type="DNASU" id="75766"/>
<dbReference type="Ensembl" id="ENSMUST00000022913.6">
    <molecule id="Q7TNJ0-1"/>
    <property type="protein sequence ID" value="ENSMUSP00000022913.5"/>
    <property type="gene ID" value="ENSMUSG00000022303.10"/>
</dbReference>
<dbReference type="Ensembl" id="ENSMUST00000227368.2">
    <molecule id="Q7TNJ0-3"/>
    <property type="protein sequence ID" value="ENSMUSP00000154397.2"/>
    <property type="gene ID" value="ENSMUSG00000022303.10"/>
</dbReference>
<dbReference type="Ensembl" id="ENSMUST00000228556.2">
    <molecule id="Q7TNJ0-4"/>
    <property type="protein sequence ID" value="ENSMUSP00000154362.2"/>
    <property type="gene ID" value="ENSMUSG00000022303.10"/>
</dbReference>
<dbReference type="GeneID" id="75766"/>
<dbReference type="KEGG" id="mmu:75766"/>
<dbReference type="UCSC" id="uc007voi.2">
    <molecule id="Q7TNJ0-1"/>
    <property type="organism name" value="mouse"/>
</dbReference>
<dbReference type="UCSC" id="uc007voj.2">
    <molecule id="Q7TNJ0-4"/>
    <property type="organism name" value="mouse"/>
</dbReference>
<dbReference type="UCSC" id="uc011zsn.2">
    <molecule id="Q7TNJ0-3"/>
    <property type="organism name" value="mouse"/>
</dbReference>
<dbReference type="AGR" id="MGI:1923016"/>
<dbReference type="CTD" id="81501"/>
<dbReference type="MGI" id="MGI:1923016">
    <property type="gene designation" value="Dcstamp"/>
</dbReference>
<dbReference type="VEuPathDB" id="HostDB:ENSMUSG00000022303"/>
<dbReference type="eggNOG" id="ENOG502QWDQ">
    <property type="taxonomic scope" value="Eukaryota"/>
</dbReference>
<dbReference type="GeneTree" id="ENSGT00940000153269"/>
<dbReference type="HOGENOM" id="CLU_046145_0_0_1"/>
<dbReference type="InParanoid" id="Q7TNJ0"/>
<dbReference type="OMA" id="CFKHLRC"/>
<dbReference type="OrthoDB" id="9949280at2759"/>
<dbReference type="PhylomeDB" id="Q7TNJ0"/>
<dbReference type="TreeFam" id="TF318254"/>
<dbReference type="BioGRID-ORCS" id="75766">
    <property type="hits" value="1 hit in 79 CRISPR screens"/>
</dbReference>
<dbReference type="PRO" id="PR:Q7TNJ0"/>
<dbReference type="Proteomes" id="UP000000589">
    <property type="component" value="Chromosome 15"/>
</dbReference>
<dbReference type="RNAct" id="Q7TNJ0">
    <property type="molecule type" value="protein"/>
</dbReference>
<dbReference type="Bgee" id="ENSMUSG00000022303">
    <property type="expression patterns" value="Expressed in hindlimb long bone and 14 other cell types or tissues"/>
</dbReference>
<dbReference type="ExpressionAtlas" id="Q7TNJ0">
    <property type="expression patterns" value="baseline and differential"/>
</dbReference>
<dbReference type="GO" id="GO:0009986">
    <property type="term" value="C:cell surface"/>
    <property type="evidence" value="ECO:0000314"/>
    <property type="project" value="UniProtKB"/>
</dbReference>
<dbReference type="GO" id="GO:0005789">
    <property type="term" value="C:endoplasmic reticulum membrane"/>
    <property type="evidence" value="ECO:0000314"/>
    <property type="project" value="UniProtKB"/>
</dbReference>
<dbReference type="GO" id="GO:0033116">
    <property type="term" value="C:endoplasmic reticulum-Golgi intermediate compartment membrane"/>
    <property type="evidence" value="ECO:0007669"/>
    <property type="project" value="UniProtKB-SubCell"/>
</dbReference>
<dbReference type="GO" id="GO:0010008">
    <property type="term" value="C:endosome membrane"/>
    <property type="evidence" value="ECO:0000314"/>
    <property type="project" value="UniProtKB"/>
</dbReference>
<dbReference type="GO" id="GO:0016020">
    <property type="term" value="C:membrane"/>
    <property type="evidence" value="ECO:0000303"/>
    <property type="project" value="UniProtKB"/>
</dbReference>
<dbReference type="GO" id="GO:0005886">
    <property type="term" value="C:plasma membrane"/>
    <property type="evidence" value="ECO:0007669"/>
    <property type="project" value="UniProtKB-SubCell"/>
</dbReference>
<dbReference type="GO" id="GO:0071353">
    <property type="term" value="P:cellular response to interleukin-4"/>
    <property type="evidence" value="ECO:0000250"/>
    <property type="project" value="UniProtKB"/>
</dbReference>
<dbReference type="GO" id="GO:0036006">
    <property type="term" value="P:cellular response to macrophage colony-stimulating factor stimulus"/>
    <property type="evidence" value="ECO:0000314"/>
    <property type="project" value="UniProtKB"/>
</dbReference>
<dbReference type="GO" id="GO:0071356">
    <property type="term" value="P:cellular response to tumor necrosis factor"/>
    <property type="evidence" value="ECO:0000314"/>
    <property type="project" value="UniProtKB"/>
</dbReference>
<dbReference type="GO" id="GO:0061025">
    <property type="term" value="P:membrane fusion"/>
    <property type="evidence" value="ECO:0000314"/>
    <property type="project" value="UniProtKB"/>
</dbReference>
<dbReference type="GO" id="GO:0043011">
    <property type="term" value="P:myeloid dendritic cell differentiation"/>
    <property type="evidence" value="ECO:0000314"/>
    <property type="project" value="UniProtKB"/>
</dbReference>
<dbReference type="GO" id="GO:0030308">
    <property type="term" value="P:negative regulation of cell growth"/>
    <property type="evidence" value="ECO:0000314"/>
    <property type="project" value="UniProtKB"/>
</dbReference>
<dbReference type="GO" id="GO:0030316">
    <property type="term" value="P:osteoclast differentiation"/>
    <property type="evidence" value="ECO:0000315"/>
    <property type="project" value="UniProtKB"/>
</dbReference>
<dbReference type="GO" id="GO:0072675">
    <property type="term" value="P:osteoclast fusion"/>
    <property type="evidence" value="ECO:0000314"/>
    <property type="project" value="UniProtKB"/>
</dbReference>
<dbReference type="GO" id="GO:0045780">
    <property type="term" value="P:positive regulation of bone resorption"/>
    <property type="evidence" value="ECO:0000315"/>
    <property type="project" value="UniProtKB"/>
</dbReference>
<dbReference type="GO" id="GO:0034241">
    <property type="term" value="P:positive regulation of macrophage fusion"/>
    <property type="evidence" value="ECO:0000314"/>
    <property type="project" value="UniProtKB"/>
</dbReference>
<dbReference type="GO" id="GO:0045657">
    <property type="term" value="P:positive regulation of monocyte differentiation"/>
    <property type="evidence" value="ECO:0000314"/>
    <property type="project" value="UniProtKB"/>
</dbReference>
<dbReference type="InterPro" id="IPR051856">
    <property type="entry name" value="CSR-E3_Ligase_Protein"/>
</dbReference>
<dbReference type="InterPro" id="IPR012858">
    <property type="entry name" value="DC_STAMP-like"/>
</dbReference>
<dbReference type="PANTHER" id="PTHR21041">
    <property type="entry name" value="DENDRITIC CELL-SPECIFIC TRANSMEMBRANE PROTEIN"/>
    <property type="match status" value="1"/>
</dbReference>
<dbReference type="PANTHER" id="PTHR21041:SF2">
    <property type="entry name" value="DENDRITIC CELL-SPECIFIC TRANSMEMBRANE PROTEIN"/>
    <property type="match status" value="1"/>
</dbReference>
<dbReference type="Pfam" id="PF07782">
    <property type="entry name" value="DC_STAMP"/>
    <property type="match status" value="1"/>
</dbReference>
<evidence type="ECO:0000250" key="1"/>
<evidence type="ECO:0000255" key="2"/>
<evidence type="ECO:0000269" key="3">
    <source>
    </source>
</evidence>
<evidence type="ECO:0000269" key="4">
    <source>
    </source>
</evidence>
<evidence type="ECO:0000269" key="5">
    <source>
    </source>
</evidence>
<evidence type="ECO:0000269" key="6">
    <source>
    </source>
</evidence>
<evidence type="ECO:0000269" key="7">
    <source>
    </source>
</evidence>
<evidence type="ECO:0000269" key="8">
    <source>
    </source>
</evidence>
<evidence type="ECO:0000269" key="9">
    <source>
    </source>
</evidence>
<evidence type="ECO:0000269" key="10">
    <source>
    </source>
</evidence>
<evidence type="ECO:0000269" key="11">
    <source>
    </source>
</evidence>
<evidence type="ECO:0000269" key="12">
    <source>
    </source>
</evidence>
<evidence type="ECO:0000269" key="13">
    <source ref="2"/>
</evidence>
<evidence type="ECO:0000303" key="14">
    <source>
    </source>
</evidence>
<evidence type="ECO:0000303" key="15">
    <source>
    </source>
</evidence>
<evidence type="ECO:0000303" key="16">
    <source ref="2"/>
</evidence>
<evidence type="ECO:0000305" key="17"/>
<evidence type="ECO:0000312" key="18">
    <source>
        <dbReference type="EMBL" id="AAR99406.1"/>
    </source>
</evidence>
<evidence type="ECO:0000312" key="19">
    <source>
        <dbReference type="EMBL" id="BAC81438.1"/>
    </source>
</evidence>
<gene>
    <name type="primary">Dcstamp</name>
    <name type="synonym">Tm7sf4</name>
</gene>
<keyword id="KW-0025">Alternative splicing</keyword>
<keyword id="KW-1003">Cell membrane</keyword>
<keyword id="KW-0221">Differentiation</keyword>
<keyword id="KW-0256">Endoplasmic reticulum</keyword>
<keyword id="KW-0967">Endosome</keyword>
<keyword id="KW-0391">Immunity</keyword>
<keyword id="KW-0472">Membrane</keyword>
<keyword id="KW-1185">Reference proteome</keyword>
<keyword id="KW-0812">Transmembrane</keyword>
<keyword id="KW-1133">Transmembrane helix</keyword>
<name>DCSTP_MOUSE</name>
<reference evidence="17 19" key="1">
    <citation type="journal article" date="2004" name="J. Exp. Med.">
        <title>RANKL-induced DC-STAMP is essential for osteoclastogenesis.</title>
        <authorList>
            <person name="Kukita T."/>
            <person name="Wada N."/>
            <person name="Kukita A."/>
            <person name="Kakimoto T."/>
            <person name="Sandra F."/>
            <person name="Toh K."/>
            <person name="Nagata K."/>
            <person name="Iijima T."/>
            <person name="Horiuchi M."/>
            <person name="Matsusaki H."/>
            <person name="Hieshima K."/>
            <person name="Yoshie O."/>
            <person name="Nomiyama H."/>
        </authorList>
    </citation>
    <scope>NUCLEOTIDE SEQUENCE [MRNA] (ISOFORMS 1 AND 3)</scope>
    <scope>FUNCTION</scope>
    <scope>SUBCELLULAR LOCATION</scope>
    <scope>INDUCTION</scope>
    <source>
        <tissue evidence="3">Macrophage</tissue>
    </source>
</reference>
<reference evidence="17 18" key="2">
    <citation type="submission" date="2004-01" db="EMBL/GenBank/DDBJ databases">
        <title>Identification and characterization of osteoclast specific molecules.</title>
        <authorList>
            <person name="Miyamoto T."/>
            <person name="Sawatani Y."/>
            <person name="Suda T."/>
        </authorList>
    </citation>
    <scope>NUCLEOTIDE SEQUENCE [MRNA] (ISOFORMS 1; 2 AND 4)</scope>
    <source>
        <strain evidence="18">C57BL/6J</strain>
        <tissue evidence="18">Osteoclast</tissue>
    </source>
</reference>
<reference key="3">
    <citation type="journal article" date="2005" name="Science">
        <title>The transcriptional landscape of the mammalian genome.</title>
        <authorList>
            <person name="Carninci P."/>
            <person name="Kasukawa T."/>
            <person name="Katayama S."/>
            <person name="Gough J."/>
            <person name="Frith M.C."/>
            <person name="Maeda N."/>
            <person name="Oyama R."/>
            <person name="Ravasi T."/>
            <person name="Lenhard B."/>
            <person name="Wells C."/>
            <person name="Kodzius R."/>
            <person name="Shimokawa K."/>
            <person name="Bajic V.B."/>
            <person name="Brenner S.E."/>
            <person name="Batalov S."/>
            <person name="Forrest A.R."/>
            <person name="Zavolan M."/>
            <person name="Davis M.J."/>
            <person name="Wilming L.G."/>
            <person name="Aidinis V."/>
            <person name="Allen J.E."/>
            <person name="Ambesi-Impiombato A."/>
            <person name="Apweiler R."/>
            <person name="Aturaliya R.N."/>
            <person name="Bailey T.L."/>
            <person name="Bansal M."/>
            <person name="Baxter L."/>
            <person name="Beisel K.W."/>
            <person name="Bersano T."/>
            <person name="Bono H."/>
            <person name="Chalk A.M."/>
            <person name="Chiu K.P."/>
            <person name="Choudhary V."/>
            <person name="Christoffels A."/>
            <person name="Clutterbuck D.R."/>
            <person name="Crowe M.L."/>
            <person name="Dalla E."/>
            <person name="Dalrymple B.P."/>
            <person name="de Bono B."/>
            <person name="Della Gatta G."/>
            <person name="di Bernardo D."/>
            <person name="Down T."/>
            <person name="Engstrom P."/>
            <person name="Fagiolini M."/>
            <person name="Faulkner G."/>
            <person name="Fletcher C.F."/>
            <person name="Fukushima T."/>
            <person name="Furuno M."/>
            <person name="Futaki S."/>
            <person name="Gariboldi M."/>
            <person name="Georgii-Hemming P."/>
            <person name="Gingeras T.R."/>
            <person name="Gojobori T."/>
            <person name="Green R.E."/>
            <person name="Gustincich S."/>
            <person name="Harbers M."/>
            <person name="Hayashi Y."/>
            <person name="Hensch T.K."/>
            <person name="Hirokawa N."/>
            <person name="Hill D."/>
            <person name="Huminiecki L."/>
            <person name="Iacono M."/>
            <person name="Ikeo K."/>
            <person name="Iwama A."/>
            <person name="Ishikawa T."/>
            <person name="Jakt M."/>
            <person name="Kanapin A."/>
            <person name="Katoh M."/>
            <person name="Kawasawa Y."/>
            <person name="Kelso J."/>
            <person name="Kitamura H."/>
            <person name="Kitano H."/>
            <person name="Kollias G."/>
            <person name="Krishnan S.P."/>
            <person name="Kruger A."/>
            <person name="Kummerfeld S.K."/>
            <person name="Kurochkin I.V."/>
            <person name="Lareau L.F."/>
            <person name="Lazarevic D."/>
            <person name="Lipovich L."/>
            <person name="Liu J."/>
            <person name="Liuni S."/>
            <person name="McWilliam S."/>
            <person name="Madan Babu M."/>
            <person name="Madera M."/>
            <person name="Marchionni L."/>
            <person name="Matsuda H."/>
            <person name="Matsuzawa S."/>
            <person name="Miki H."/>
            <person name="Mignone F."/>
            <person name="Miyake S."/>
            <person name="Morris K."/>
            <person name="Mottagui-Tabar S."/>
            <person name="Mulder N."/>
            <person name="Nakano N."/>
            <person name="Nakauchi H."/>
            <person name="Ng P."/>
            <person name="Nilsson R."/>
            <person name="Nishiguchi S."/>
            <person name="Nishikawa S."/>
            <person name="Nori F."/>
            <person name="Ohara O."/>
            <person name="Okazaki Y."/>
            <person name="Orlando V."/>
            <person name="Pang K.C."/>
            <person name="Pavan W.J."/>
            <person name="Pavesi G."/>
            <person name="Pesole G."/>
            <person name="Petrovsky N."/>
            <person name="Piazza S."/>
            <person name="Reed J."/>
            <person name="Reid J.F."/>
            <person name="Ring B.Z."/>
            <person name="Ringwald M."/>
            <person name="Rost B."/>
            <person name="Ruan Y."/>
            <person name="Salzberg S.L."/>
            <person name="Sandelin A."/>
            <person name="Schneider C."/>
            <person name="Schoenbach C."/>
            <person name="Sekiguchi K."/>
            <person name="Semple C.A."/>
            <person name="Seno S."/>
            <person name="Sessa L."/>
            <person name="Sheng Y."/>
            <person name="Shibata Y."/>
            <person name="Shimada H."/>
            <person name="Shimada K."/>
            <person name="Silva D."/>
            <person name="Sinclair B."/>
            <person name="Sperling S."/>
            <person name="Stupka E."/>
            <person name="Sugiura K."/>
            <person name="Sultana R."/>
            <person name="Takenaka Y."/>
            <person name="Taki K."/>
            <person name="Tammoja K."/>
            <person name="Tan S.L."/>
            <person name="Tang S."/>
            <person name="Taylor M.S."/>
            <person name="Tegner J."/>
            <person name="Teichmann S.A."/>
            <person name="Ueda H.R."/>
            <person name="van Nimwegen E."/>
            <person name="Verardo R."/>
            <person name="Wei C.L."/>
            <person name="Yagi K."/>
            <person name="Yamanishi H."/>
            <person name="Zabarovsky E."/>
            <person name="Zhu S."/>
            <person name="Zimmer A."/>
            <person name="Hide W."/>
            <person name="Bult C."/>
            <person name="Grimmond S.M."/>
            <person name="Teasdale R.D."/>
            <person name="Liu E.T."/>
            <person name="Brusic V."/>
            <person name="Quackenbush J."/>
            <person name="Wahlestedt C."/>
            <person name="Mattick J.S."/>
            <person name="Hume D.A."/>
            <person name="Kai C."/>
            <person name="Sasaki D."/>
            <person name="Tomaru Y."/>
            <person name="Fukuda S."/>
            <person name="Kanamori-Katayama M."/>
            <person name="Suzuki M."/>
            <person name="Aoki J."/>
            <person name="Arakawa T."/>
            <person name="Iida J."/>
            <person name="Imamura K."/>
            <person name="Itoh M."/>
            <person name="Kato T."/>
            <person name="Kawaji H."/>
            <person name="Kawagashira N."/>
            <person name="Kawashima T."/>
            <person name="Kojima M."/>
            <person name="Kondo S."/>
            <person name="Konno H."/>
            <person name="Nakano K."/>
            <person name="Ninomiya N."/>
            <person name="Nishio T."/>
            <person name="Okada M."/>
            <person name="Plessy C."/>
            <person name="Shibata K."/>
            <person name="Shiraki T."/>
            <person name="Suzuki S."/>
            <person name="Tagami M."/>
            <person name="Waki K."/>
            <person name="Watahiki A."/>
            <person name="Okamura-Oho Y."/>
            <person name="Suzuki H."/>
            <person name="Kawai J."/>
            <person name="Hayashizaki Y."/>
        </authorList>
    </citation>
    <scope>NUCLEOTIDE SEQUENCE [LARGE SCALE MRNA] (ISOFORM 4)</scope>
    <source>
        <strain>C57BL/6J</strain>
        <tissue>Head</tissue>
    </source>
</reference>
<reference key="4">
    <citation type="journal article" date="2004" name="Genome Res.">
        <title>The status, quality, and expansion of the NIH full-length cDNA project: the Mammalian Gene Collection (MGC).</title>
        <authorList>
            <consortium name="The MGC Project Team"/>
        </authorList>
    </citation>
    <scope>NUCLEOTIDE SEQUENCE [LARGE SCALE MRNA] (ISOFORM 1)</scope>
    <source>
        <tissue>Brain</tissue>
    </source>
</reference>
<reference key="5">
    <citation type="journal article" date="2005" name="J. Leukoc. Biol.">
        <title>The dendritic cell-derived protein DC-STAMP is highly conserved and localizes to the endoplasmic reticulum.</title>
        <authorList>
            <person name="Eleveld-Trancikova D."/>
            <person name="Triantis V."/>
            <person name="Moulin V."/>
            <person name="Looman M.W."/>
            <person name="Wijers M."/>
            <person name="Fransen J.A."/>
            <person name="Lemckert A.A."/>
            <person name="Havenga M.J."/>
            <person name="Figdor C.G."/>
            <person name="Janssen R.A."/>
            <person name="Adema G.J."/>
        </authorList>
    </citation>
    <scope>SUBCELLULAR LOCATION</scope>
    <scope>GLYCOSYLATION</scope>
    <scope>INDUCTION</scope>
    <scope>TISSUE SPECIFICITY</scope>
</reference>
<reference key="6">
    <citation type="journal article" date="2005" name="J. Exp. Med.">
        <title>DC-STAMP is essential for cell-cell fusion in osteoclasts and foreign body giant cells.</title>
        <authorList>
            <person name="Yagi M."/>
            <person name="Miyamoto T."/>
            <person name="Sawatani Y."/>
            <person name="Iwamoto K."/>
            <person name="Hosogane N."/>
            <person name="Fujita N."/>
            <person name="Morita K."/>
            <person name="Ninomiya K."/>
            <person name="Suzuki T."/>
            <person name="Miyamoto K."/>
            <person name="Oike Y."/>
            <person name="Takeya M."/>
            <person name="Toyama Y."/>
            <person name="Suda T."/>
        </authorList>
    </citation>
    <scope>FUNCTION IN CELL FUSION</scope>
    <scope>ALTERNATIVE SPLICING (ISOFORMS 1 AND 2)</scope>
    <scope>DISRUPTION PHENOTYPE</scope>
    <scope>INDUCTION</scope>
    <scope>TISSUE SPECIFICITY</scope>
</reference>
<reference key="7">
    <citation type="journal article" date="2006" name="J. Bone Miner. Metab.">
        <title>Role of DC-STAMP in cellular fusion of osteoclasts and macrophage giant cells.</title>
        <authorList>
            <person name="Yagi M."/>
            <person name="Miyamoto T."/>
            <person name="Toyama Y."/>
            <person name="Suda T."/>
        </authorList>
    </citation>
    <scope>FUNCTION IN CELL FUSION</scope>
    <scope>DISRUPTION PHENOTYPE</scope>
</reference>
<reference key="8">
    <citation type="journal article" date="2006" name="Mod. Rheumatol.">
        <title>The dendritic cell-specific transmembrane protein DC-STAMP is essential for osteoclast fusion and osteoclast bone-resorbing activity.</title>
        <authorList>
            <person name="Miyamoto T."/>
        </authorList>
    </citation>
    <scope>FUNCTION IN CELL FUSION</scope>
    <scope>DISRUPTION PHENOTYPE</scope>
</reference>
<reference key="9">
    <citation type="journal article" date="2008" name="Int. Immunol.">
        <title>The role of DC-STAMP in maintenance of immune tolerance through regulation of dendritic cell function.</title>
        <authorList>
            <person name="Sawatani Y."/>
            <person name="Miyamoto T."/>
            <person name="Nagai S."/>
            <person name="Maruya M."/>
            <person name="Imai J."/>
            <person name="Miyamoto K."/>
            <person name="Fujita N."/>
            <person name="Ninomiya K."/>
            <person name="Suzuki T."/>
            <person name="Iwasaki R."/>
            <person name="Toyama Y."/>
            <person name="Shinohara M."/>
            <person name="Koyasu S."/>
            <person name="Suda T."/>
        </authorList>
    </citation>
    <scope>FUNCTION IN IMMUNE TOLERANCE</scope>
    <scope>SUBCELLULAR LOCATION</scope>
    <scope>DISRUPTION PHENOTYPE</scope>
</reference>
<reference key="10">
    <citation type="journal article" date="2008" name="Leukemia">
        <title>The DC-derived protein DC-STAMP influences differentiation of myeloid cells.</title>
        <authorList>
            <person name="Eleveld-Trancikova D."/>
            <person name="Janssen R.A."/>
            <person name="Hendriks I.A."/>
            <person name="Looman M.W."/>
            <person name="Moulin V."/>
            <person name="Jansen B.J."/>
            <person name="Jansen J.H."/>
            <person name="Figdor C.G."/>
            <person name="Adema G.J."/>
        </authorList>
    </citation>
    <scope>FUNCTION IN MYELOID DIFFERENTIATION</scope>
</reference>
<reference key="11">
    <citation type="journal article" date="2009" name="Mol. Immunol.">
        <title>OS9 interacts with DC-STAMP and modulates its intracellular localization in response to TLR ligation.</title>
        <authorList>
            <person name="Jansen B.J."/>
            <person name="Eleveld-Trancikova D."/>
            <person name="Sanecka A."/>
            <person name="van Hout-Kuijer M."/>
            <person name="Hendriks I.A."/>
            <person name="Looman M.G."/>
            <person name="Leusen J.H."/>
            <person name="Adema G.J."/>
        </authorList>
    </citation>
    <scope>FUNCTION</scope>
    <scope>INTERACTION WITH OS9</scope>
    <scope>INDUCTION</scope>
    <scope>SUBCELLULAR LOCATION</scope>
</reference>
<reference key="12">
    <citation type="journal article" date="2010" name="J. Cell. Physiol.">
        <title>RANKL induces heterogeneous DC-STAMP(lo) and DC-STAMP(hi) osteoclast precursors of which the DC-STAMP(lo) precursors are the master fusogens.</title>
        <authorList>
            <person name="Mensah K.A."/>
            <person name="Ritchlin C.T."/>
            <person name="Schwarz E.M."/>
        </authorList>
    </citation>
    <scope>FUNCTION IN MYELOID DIFFERENTIATION</scope>
    <scope>HOMODIMERIZATION</scope>
    <scope>SUBCELLULAR LOCATION</scope>
</reference>
<reference key="13">
    <citation type="journal article" date="2012" name="J. Bone Miner. Res.">
        <title>Osteoclast stimulatory transmembrane protein and dendritic cell-specific transmembrane protein cooperatively modulate cell-cell fusion to form osteoclasts and foreign body giant cells.</title>
        <authorList>
            <person name="Miyamoto H."/>
            <person name="Suzuki T."/>
            <person name="Miyauchi Y."/>
            <person name="Iwasaki R."/>
            <person name="Kobayashi T."/>
            <person name="Sato Y."/>
            <person name="Miyamoto K."/>
            <person name="Hoshi H."/>
            <person name="Hashimoto K."/>
            <person name="Yoshida S."/>
            <person name="Hao W."/>
            <person name="Mori T."/>
            <person name="Kanagawa H."/>
            <person name="Katsuyama E."/>
            <person name="Fujie A."/>
            <person name="Morioka H."/>
            <person name="Matsumoto M."/>
            <person name="Chiba K."/>
            <person name="Takeya M."/>
            <person name="Toyama Y."/>
            <person name="Miyamoto T."/>
        </authorList>
    </citation>
    <scope>FUNCTION IN CELL FUSION</scope>
    <scope>DISRUPTION PHENOTYPE</scope>
    <scope>INDUCTION</scope>
    <scope>TISSUE SPECIFICITY</scope>
</reference>
<proteinExistence type="evidence at protein level"/>
<feature type="chain" id="PRO_0000072585" description="Dendritic cell-specific transmembrane protein">
    <location>
        <begin position="1"/>
        <end position="470"/>
    </location>
</feature>
<feature type="topological domain" description="Cytoplasmic" evidence="2">
    <location>
        <begin position="1"/>
        <end position="33"/>
    </location>
</feature>
<feature type="transmembrane region" description="Helical" evidence="2">
    <location>
        <begin position="34"/>
        <end position="54"/>
    </location>
</feature>
<feature type="topological domain" description="Extracellular" evidence="2">
    <location>
        <position position="55"/>
    </location>
</feature>
<feature type="transmembrane region" description="Helical" evidence="2">
    <location>
        <begin position="56"/>
        <end position="76"/>
    </location>
</feature>
<feature type="topological domain" description="Cytoplasmic" evidence="2">
    <location>
        <begin position="77"/>
        <end position="97"/>
    </location>
</feature>
<feature type="transmembrane region" description="Helical" evidence="2">
    <location>
        <begin position="98"/>
        <end position="118"/>
    </location>
</feature>
<feature type="topological domain" description="Extracellular" evidence="2">
    <location>
        <begin position="119"/>
        <end position="209"/>
    </location>
</feature>
<feature type="transmembrane region" description="Helical" evidence="2">
    <location>
        <begin position="210"/>
        <end position="230"/>
    </location>
</feature>
<feature type="topological domain" description="Cytoplasmic" evidence="2">
    <location>
        <begin position="231"/>
        <end position="292"/>
    </location>
</feature>
<feature type="transmembrane region" description="Helical" evidence="2">
    <location>
        <begin position="293"/>
        <end position="313"/>
    </location>
</feature>
<feature type="topological domain" description="Extracellular" evidence="2">
    <location>
        <begin position="314"/>
        <end position="376"/>
    </location>
</feature>
<feature type="transmembrane region" description="Helical" evidence="2">
    <location>
        <begin position="377"/>
        <end position="397"/>
    </location>
</feature>
<feature type="topological domain" description="Cytoplasmic" evidence="2">
    <location>
        <begin position="398"/>
        <end position="470"/>
    </location>
</feature>
<feature type="splice variant" id="VSP_051763" description="In isoform 2." evidence="16">
    <location>
        <begin position="95"/>
        <end position="177"/>
    </location>
</feature>
<feature type="splice variant" id="VSP_051764" description="In isoform 4." evidence="15 16">
    <location>
        <begin position="344"/>
        <end position="446"/>
    </location>
</feature>
<feature type="splice variant" id="VSP_051765" description="In isoform 3." evidence="14">
    <location>
        <begin position="344"/>
        <end position="399"/>
    </location>
</feature>
<feature type="sequence conflict" description="In Ref. 2; AAR99408 and 3." evidence="17" ref="2 3">
    <original>F</original>
    <variation>L</variation>
    <location>
        <position position="449"/>
    </location>
</feature>
<accession>Q7TNJ0</accession>
<accession>B2RT61</accession>
<accession>Q6R315</accession>
<accession>Q7TNI9</accession>
<accession>Q9D619</accession>
<sequence>MRLWTLGTSIFLRLWGTYVFPRSPSWLDFIQHLGVCCFVAFLSVSLFSAAFYWILPPVALLSSVWMITCVFLCCSKRARCFILLAVLSCGLREGRNALIAAGTGVVIFGHVENIFYNFRGLLDSMTCNLRAKSFSVHFPLLKRYTEAIQWIYGLATPLNLFDDLVSWNQTLVVSLFSPSHALEAHMNDTRGEVLGVLHHMVVTTELLTSVGQKLLALAGLLLILVSTGLFLKRFLGPCGWKYENVYITKQFVRFDEKERHQQRPCVLPLNKKERKKYVIVPSLQLTPKEKKTLGLFFLPVLTYLYMWVLFAAVDYLLYRLISSMNKQFQSLPGLEVHLKLRGEKQGTQGVVHDSAFNISMFEPSCIPKPRLSVSETWVPLSIILLTLIILGLLSSMLMQLKILVSVSFYPKVERERIEYLHAKLLEKRSKQPLREADGKPSLYFKKIHFWFPVLKMIRKKQTIPANEDDL</sequence>
<protein>
    <recommendedName>
        <fullName>Dendritic cell-specific transmembrane protein</fullName>
        <shortName>DC-STAMP</shortName>
        <shortName>mDC-STAMP</shortName>
    </recommendedName>
    <alternativeName>
        <fullName>Dendrocyte-expressed seven transmembrane protein</fullName>
    </alternativeName>
    <alternativeName>
        <fullName>Transmembrane 7 superfamily member 4</fullName>
    </alternativeName>
</protein>
<comment type="function">
    <text evidence="3 5 6 7 8 9 10 11 12">Probable cell surface receptor that plays several roles in cellular fusion, cell differentiation, bone and immune homeostasis. Plays a role in TNFSF11-mediated osteoclastogenesis. Cooperates with OCSTAMP in modulating cell-cell fusion in both osteoclasts and foreign body giant cells (FBGCs). Participates in osteoclast bone resorption. Involved in inducing the expression of tartrate-resistant acid phosphatase in osteoclast precursors. Plays a role in haematopoietic stem cell differentiation of bone marrow cells toward the myeloid lineage. Inhibits the development of neutrophilic granulocytes. Plays also a role in the regulation of dendritic cell (DC) antigen presentation activity by controlling phagocytic activity. Involved in the maintenance of immune self-tolerance and avoidance of autoimmune reactions.</text>
</comment>
<comment type="subunit">
    <text evidence="1 10">Interacts with CREB3 (By similarity). Monomer. Homodimer. Isoform 1 interacts (via the C-terminus cytoplasmic tail) with OS9 isoform 1 (via the C-terminus tail); the interaction induces DCSTAMP redistribution to the endoplasmic reticulum-Golgi intermediate compartment. Isoform 1 interacts (via the C-terminus cytoplasmic tail) with OS9 isoform 2 (via the C-terminus tail).</text>
</comment>
<comment type="subcellular location">
    <subcellularLocation>
        <location evidence="17">Cell membrane</location>
        <topology evidence="17">Multi-pass membrane protein</topology>
    </subcellularLocation>
    <subcellularLocation>
        <location>Endoplasmic reticulum membrane</location>
        <topology>Multi-pass membrane protein</topology>
    </subcellularLocation>
    <subcellularLocation>
        <location>Endoplasmic reticulum-Golgi intermediate compartment membrane</location>
        <topology>Multi-pass membrane protein</topology>
    </subcellularLocation>
    <subcellularLocation>
        <location>Endosome</location>
    </subcellularLocation>
    <text>Localized to the cell surface in osteoclasts and undifferentiated monocytes. Intracellular internalized DCSTAMP is detected in a fraction of RANKL-induced osteoclast precursor. Colocalizes with OS9 in the endoplasmic reticulum (ER) of immature dendritic cell (DC). Translocates from the endoplasmic reticulum to the intermediate/Golgi compartment upon maturation of DC in a OS9-dependent manner. Colocalizes with LAMP1 in endosomes.</text>
</comment>
<comment type="alternative products">
    <event type="alternative splicing"/>
    <isoform>
        <id>Q7TNJ0-1</id>
        <name evidence="3">1</name>
        <sequence type="displayed"/>
    </isoform>
    <isoform>
        <id>Q7TNJ0-2</id>
        <name evidence="13">2</name>
        <sequence type="described" ref="VSP_051763"/>
    </isoform>
    <isoform>
        <id>Q7TNJ0-3</id>
        <name evidence="3">3</name>
        <sequence type="described" ref="VSP_051765"/>
    </isoform>
    <isoform>
        <id>Q7TNJ0-4</id>
        <name evidence="13">4</name>
        <sequence type="described" ref="VSP_051764"/>
    </isoform>
</comment>
<comment type="tissue specificity">
    <text evidence="4 5 12">Expressed in macrophages and bone marrow dendritic cells (BM-DC). Weakly expressed in the spleen and lymph node. Highly expressed in multi-nuclear osteoclasts compared to mono-nuclear macrophages. Expressed in foreign body giant cells (FBGCs). Isoform 1 and isoform 2 are expressed in osteoclasts.</text>
</comment>
<comment type="induction">
    <text evidence="3 4 5 10 12">Up-regulated by IL4/interleukin-4, macrophage colony-stimulating factor (M-CSF), receptor activator of NF-KB ligand (RANKL), lipopolysaccharide (LPS) and toll-like receptor (TLR). Up-regulated by TNFSF11-induced osteoclast differentiation in combination with TNF-alpha. Down-regulated upon dendritic cell (DC) maturation.</text>
</comment>
<comment type="domain">
    <text>Several domains are necessary for interacting with OS9. The region in the cytoplasmic tail that is necessary for interaction with OS9, is also required for its transport.</text>
</comment>
<comment type="PTM">
    <text evidence="4">Glycosylated.</text>
</comment>
<comment type="disruption phenotype">
    <text evidence="5 6 7 9 12">Mice show a lack of osteoclast and foreign body giant cells multi-nuclear formation and a bone-resorbing efficiency reduction. Mice show increased bone mass. Older (&gt;12 months) mice suffered from multisystemic inflammations in the kidney, lung and salivary gland. Mice show autoimmune symptoms, like dendritic cells (DC) with increased phagocytotic activity and antigen presentation.</text>
</comment>